<accession>B7JM50</accession>
<feature type="chain" id="PRO_1000118272" description="3-dehydroquinate dehydratase">
    <location>
        <begin position="1"/>
        <end position="146"/>
    </location>
</feature>
<feature type="active site" description="Proton acceptor" evidence="1">
    <location>
        <position position="23"/>
    </location>
</feature>
<feature type="active site" description="Proton donor" evidence="1">
    <location>
        <position position="100"/>
    </location>
</feature>
<feature type="binding site" evidence="1">
    <location>
        <position position="74"/>
    </location>
    <ligand>
        <name>substrate</name>
    </ligand>
</feature>
<feature type="binding site" evidence="1">
    <location>
        <position position="80"/>
    </location>
    <ligand>
        <name>substrate</name>
    </ligand>
</feature>
<feature type="binding site" evidence="1">
    <location>
        <position position="87"/>
    </location>
    <ligand>
        <name>substrate</name>
    </ligand>
</feature>
<feature type="binding site" evidence="1">
    <location>
        <begin position="101"/>
        <end position="102"/>
    </location>
    <ligand>
        <name>substrate</name>
    </ligand>
</feature>
<feature type="binding site" evidence="1">
    <location>
        <position position="111"/>
    </location>
    <ligand>
        <name>substrate</name>
    </ligand>
</feature>
<feature type="site" description="Transition state stabilizer" evidence="1">
    <location>
        <position position="18"/>
    </location>
</feature>
<protein>
    <recommendedName>
        <fullName evidence="1">3-dehydroquinate dehydratase</fullName>
        <shortName evidence="1">3-dehydroquinase</shortName>
        <ecNumber evidence="1">4.2.1.10</ecNumber>
    </recommendedName>
    <alternativeName>
        <fullName evidence="1">Type II DHQase</fullName>
    </alternativeName>
</protein>
<sequence length="146" mass="16165">MKKVLLVNGPNLNRLGVREVNVYGKGTLATLEADMKQEAEAMGVELECFQSNHEGAIIDRIHEAEDIYEGIILNPGAFTHYSYAIRDAIASISIPVIEVHISNIHQRESFRHESVTAAVCAGQIVGFGFYGYKLALFALMEKLREA</sequence>
<proteinExistence type="inferred from homology"/>
<keyword id="KW-0028">Amino-acid biosynthesis</keyword>
<keyword id="KW-0057">Aromatic amino acid biosynthesis</keyword>
<keyword id="KW-0456">Lyase</keyword>
<dbReference type="EC" id="4.2.1.10" evidence="1"/>
<dbReference type="EMBL" id="CP001283">
    <property type="protein sequence ID" value="ACK90529.1"/>
    <property type="molecule type" value="Genomic_DNA"/>
</dbReference>
<dbReference type="RefSeq" id="WP_000757082.1">
    <property type="nucleotide sequence ID" value="NC_011773.1"/>
</dbReference>
<dbReference type="SMR" id="B7JM50"/>
<dbReference type="GeneID" id="45024083"/>
<dbReference type="KEGG" id="bcu:BCAH820_4219"/>
<dbReference type="HOGENOM" id="CLU_090968_3_0_9"/>
<dbReference type="UniPathway" id="UPA00053">
    <property type="reaction ID" value="UER00086"/>
</dbReference>
<dbReference type="Proteomes" id="UP000001363">
    <property type="component" value="Chromosome"/>
</dbReference>
<dbReference type="GO" id="GO:0003855">
    <property type="term" value="F:3-dehydroquinate dehydratase activity"/>
    <property type="evidence" value="ECO:0007669"/>
    <property type="project" value="UniProtKB-UniRule"/>
</dbReference>
<dbReference type="GO" id="GO:0008652">
    <property type="term" value="P:amino acid biosynthetic process"/>
    <property type="evidence" value="ECO:0007669"/>
    <property type="project" value="UniProtKB-KW"/>
</dbReference>
<dbReference type="GO" id="GO:0009073">
    <property type="term" value="P:aromatic amino acid family biosynthetic process"/>
    <property type="evidence" value="ECO:0007669"/>
    <property type="project" value="UniProtKB-KW"/>
</dbReference>
<dbReference type="GO" id="GO:0009423">
    <property type="term" value="P:chorismate biosynthetic process"/>
    <property type="evidence" value="ECO:0007669"/>
    <property type="project" value="UniProtKB-UniRule"/>
</dbReference>
<dbReference type="GO" id="GO:0019631">
    <property type="term" value="P:quinate catabolic process"/>
    <property type="evidence" value="ECO:0007669"/>
    <property type="project" value="TreeGrafter"/>
</dbReference>
<dbReference type="CDD" id="cd00466">
    <property type="entry name" value="DHQase_II"/>
    <property type="match status" value="1"/>
</dbReference>
<dbReference type="Gene3D" id="3.40.50.9100">
    <property type="entry name" value="Dehydroquinase, class II"/>
    <property type="match status" value="1"/>
</dbReference>
<dbReference type="HAMAP" id="MF_00169">
    <property type="entry name" value="AroQ"/>
    <property type="match status" value="1"/>
</dbReference>
<dbReference type="InterPro" id="IPR001874">
    <property type="entry name" value="DHquinase_II"/>
</dbReference>
<dbReference type="InterPro" id="IPR018509">
    <property type="entry name" value="DHquinase_II_CS"/>
</dbReference>
<dbReference type="InterPro" id="IPR036441">
    <property type="entry name" value="DHquinase_II_sf"/>
</dbReference>
<dbReference type="NCBIfam" id="TIGR01088">
    <property type="entry name" value="aroQ"/>
    <property type="match status" value="1"/>
</dbReference>
<dbReference type="NCBIfam" id="NF003805">
    <property type="entry name" value="PRK05395.1-2"/>
    <property type="match status" value="1"/>
</dbReference>
<dbReference type="NCBIfam" id="NF003806">
    <property type="entry name" value="PRK05395.1-3"/>
    <property type="match status" value="1"/>
</dbReference>
<dbReference type="NCBIfam" id="NF003807">
    <property type="entry name" value="PRK05395.1-4"/>
    <property type="match status" value="1"/>
</dbReference>
<dbReference type="PANTHER" id="PTHR21272">
    <property type="entry name" value="CATABOLIC 3-DEHYDROQUINASE"/>
    <property type="match status" value="1"/>
</dbReference>
<dbReference type="PANTHER" id="PTHR21272:SF3">
    <property type="entry name" value="CATABOLIC 3-DEHYDROQUINASE"/>
    <property type="match status" value="1"/>
</dbReference>
<dbReference type="Pfam" id="PF01220">
    <property type="entry name" value="DHquinase_II"/>
    <property type="match status" value="1"/>
</dbReference>
<dbReference type="PIRSF" id="PIRSF001399">
    <property type="entry name" value="DHquinase_II"/>
    <property type="match status" value="1"/>
</dbReference>
<dbReference type="SUPFAM" id="SSF52304">
    <property type="entry name" value="Type II 3-dehydroquinate dehydratase"/>
    <property type="match status" value="1"/>
</dbReference>
<dbReference type="PROSITE" id="PS01029">
    <property type="entry name" value="DEHYDROQUINASE_II"/>
    <property type="match status" value="1"/>
</dbReference>
<reference key="1">
    <citation type="submission" date="2008-10" db="EMBL/GenBank/DDBJ databases">
        <title>Genome sequence of Bacillus cereus AH820.</title>
        <authorList>
            <person name="Dodson R.J."/>
            <person name="Durkin A.S."/>
            <person name="Rosovitz M.J."/>
            <person name="Rasko D.A."/>
            <person name="Hoffmaster A."/>
            <person name="Ravel J."/>
            <person name="Sutton G."/>
        </authorList>
    </citation>
    <scope>NUCLEOTIDE SEQUENCE [LARGE SCALE GENOMIC DNA]</scope>
    <source>
        <strain>AH820</strain>
    </source>
</reference>
<organism>
    <name type="scientific">Bacillus cereus (strain AH820)</name>
    <dbReference type="NCBI Taxonomy" id="405535"/>
    <lineage>
        <taxon>Bacteria</taxon>
        <taxon>Bacillati</taxon>
        <taxon>Bacillota</taxon>
        <taxon>Bacilli</taxon>
        <taxon>Bacillales</taxon>
        <taxon>Bacillaceae</taxon>
        <taxon>Bacillus</taxon>
        <taxon>Bacillus cereus group</taxon>
    </lineage>
</organism>
<evidence type="ECO:0000255" key="1">
    <source>
        <dbReference type="HAMAP-Rule" id="MF_00169"/>
    </source>
</evidence>
<comment type="function">
    <text evidence="1">Catalyzes a trans-dehydration via an enolate intermediate.</text>
</comment>
<comment type="catalytic activity">
    <reaction evidence="1">
        <text>3-dehydroquinate = 3-dehydroshikimate + H2O</text>
        <dbReference type="Rhea" id="RHEA:21096"/>
        <dbReference type="ChEBI" id="CHEBI:15377"/>
        <dbReference type="ChEBI" id="CHEBI:16630"/>
        <dbReference type="ChEBI" id="CHEBI:32364"/>
        <dbReference type="EC" id="4.2.1.10"/>
    </reaction>
</comment>
<comment type="pathway">
    <text evidence="1">Metabolic intermediate biosynthesis; chorismate biosynthesis; chorismate from D-erythrose 4-phosphate and phosphoenolpyruvate: step 3/7.</text>
</comment>
<comment type="subunit">
    <text evidence="1">Homododecamer.</text>
</comment>
<comment type="similarity">
    <text evidence="1">Belongs to the type-II 3-dehydroquinase family.</text>
</comment>
<name>AROQ_BACC0</name>
<gene>
    <name evidence="1" type="primary">aroQ</name>
    <name type="ordered locus">BCAH820_4219</name>
</gene>